<comment type="function">
    <text>Possesses antifungal activity sensitive to inorganic cations.</text>
</comment>
<comment type="subunit">
    <text>Forms oligomers in its native state.</text>
</comment>
<comment type="subcellular location">
    <subcellularLocation>
        <location evidence="1">Secreted</location>
    </subcellularLocation>
</comment>
<comment type="similarity">
    <text evidence="3">Belongs to the DEFL family.</text>
</comment>
<protein>
    <recommendedName>
        <fullName>Defensin-like protein 1</fullName>
    </recommendedName>
    <alternativeName>
        <fullName>Cysteine-rich antifungal protein 1</fullName>
        <shortName>AFP1</shortName>
    </alternativeName>
</protein>
<name>DEF1_BRANA</name>
<gene>
    <name type="primary">AFP1</name>
</gene>
<accession>P69240</accession>
<accession>P30225</accession>
<accession>Q41163</accession>
<proteinExistence type="evidence at protein level"/>
<dbReference type="BMRB" id="P69240"/>
<dbReference type="SMR" id="P69240"/>
<dbReference type="GO" id="GO:0005576">
    <property type="term" value="C:extracellular region"/>
    <property type="evidence" value="ECO:0007669"/>
    <property type="project" value="UniProtKB-SubCell"/>
</dbReference>
<dbReference type="GO" id="GO:0050832">
    <property type="term" value="P:defense response to fungus"/>
    <property type="evidence" value="ECO:0007669"/>
    <property type="project" value="UniProtKB-KW"/>
</dbReference>
<dbReference type="GO" id="GO:0031640">
    <property type="term" value="P:killing of cells of another organism"/>
    <property type="evidence" value="ECO:0007669"/>
    <property type="project" value="UniProtKB-KW"/>
</dbReference>
<dbReference type="FunFam" id="3.30.30.10:FF:000003">
    <property type="entry name" value="Defensin-like protein 1"/>
    <property type="match status" value="1"/>
</dbReference>
<dbReference type="Gene3D" id="3.30.30.10">
    <property type="entry name" value="Knottin, scorpion toxin-like"/>
    <property type="match status" value="1"/>
</dbReference>
<dbReference type="InterPro" id="IPR008176">
    <property type="entry name" value="Defensin_plant"/>
</dbReference>
<dbReference type="InterPro" id="IPR003614">
    <property type="entry name" value="Scorpion_toxin-like"/>
</dbReference>
<dbReference type="InterPro" id="IPR036574">
    <property type="entry name" value="Scorpion_toxin-like_sf"/>
</dbReference>
<dbReference type="Pfam" id="PF00304">
    <property type="entry name" value="Gamma-thionin"/>
    <property type="match status" value="1"/>
</dbReference>
<dbReference type="SMART" id="SM00505">
    <property type="entry name" value="Knot1"/>
    <property type="match status" value="1"/>
</dbReference>
<dbReference type="SUPFAM" id="SSF57095">
    <property type="entry name" value="Scorpion toxin-like"/>
    <property type="match status" value="1"/>
</dbReference>
<dbReference type="PROSITE" id="PS00940">
    <property type="entry name" value="GAMMA_THIONIN"/>
    <property type="match status" value="1"/>
</dbReference>
<keyword id="KW-0929">Antimicrobial</keyword>
<keyword id="KW-0903">Direct protein sequencing</keyword>
<keyword id="KW-1015">Disulfide bond</keyword>
<keyword id="KW-0295">Fungicide</keyword>
<keyword id="KW-0611">Plant defense</keyword>
<keyword id="KW-0873">Pyrrolidone carboxylic acid</keyword>
<keyword id="KW-0964">Secreted</keyword>
<feature type="chain" id="PRO_0000074235" description="Defensin-like protein 1">
    <location>
        <begin position="1"/>
        <end position="44" status="greater than"/>
    </location>
</feature>
<feature type="modified residue" description="Pyrrolidone carboxylic acid" evidence="2">
    <location>
        <position position="1"/>
    </location>
</feature>
<feature type="disulfide bond" evidence="1">
    <location>
        <begin position="15"/>
        <end position="36"/>
    </location>
</feature>
<feature type="non-terminal residue">
    <location>
        <position position="44"/>
    </location>
</feature>
<sequence length="44" mass="4865">QKLCERPSGTWSGVCGNNNACKNQCINLEKARHGSCNYVFPAHK</sequence>
<evidence type="ECO:0000250" key="1"/>
<evidence type="ECO:0000250" key="2">
    <source>
        <dbReference type="UniProtKB" id="P30231"/>
    </source>
</evidence>
<evidence type="ECO:0000305" key="3"/>
<organism>
    <name type="scientific">Brassica napus</name>
    <name type="common">Rape</name>
    <dbReference type="NCBI Taxonomy" id="3708"/>
    <lineage>
        <taxon>Eukaryota</taxon>
        <taxon>Viridiplantae</taxon>
        <taxon>Streptophyta</taxon>
        <taxon>Embryophyta</taxon>
        <taxon>Tracheophyta</taxon>
        <taxon>Spermatophyta</taxon>
        <taxon>Magnoliopsida</taxon>
        <taxon>eudicotyledons</taxon>
        <taxon>Gunneridae</taxon>
        <taxon>Pentapetalae</taxon>
        <taxon>rosids</taxon>
        <taxon>malvids</taxon>
        <taxon>Brassicales</taxon>
        <taxon>Brassicaceae</taxon>
        <taxon>Brassiceae</taxon>
        <taxon>Brassica</taxon>
    </lineage>
</organism>
<reference key="1">
    <citation type="journal article" date="1993" name="FEBS Lett.">
        <title>A new family of basic cysteine-rich plant antifungal proteins from Brassicaceae species.</title>
        <authorList>
            <person name="Terras F.R.G."/>
            <person name="Torrekens S."/>
            <person name="van Leuven F."/>
            <person name="Osborn R.W."/>
            <person name="Vanderleyden J."/>
            <person name="Cammue B.P.A."/>
            <person name="Broekaert W.F."/>
        </authorList>
    </citation>
    <scope>PROTEIN SEQUENCE</scope>
    <source>
        <tissue>Seed</tissue>
    </source>
</reference>